<accession>P16492</accession>
<keyword id="KW-1169">Fusion of virus membrane with host cell membrane</keyword>
<keyword id="KW-1168">Fusion of virus membrane with host membrane</keyword>
<keyword id="KW-0325">Glycoprotein</keyword>
<keyword id="KW-1032">Host cell membrane</keyword>
<keyword id="KW-1039">Host endosome</keyword>
<keyword id="KW-1043">Host membrane</keyword>
<keyword id="KW-0472">Membrane</keyword>
<keyword id="KW-1185">Reference proteome</keyword>
<keyword id="KW-0730">Sialic acid</keyword>
<keyword id="KW-0732">Signal</keyword>
<keyword id="KW-0812">Transmembrane</keyword>
<keyword id="KW-1133">Transmembrane helix</keyword>
<keyword id="KW-0261">Viral envelope protein</keyword>
<keyword id="KW-1162">Viral penetration into host cytoplasm</keyword>
<keyword id="KW-0946">Virion</keyword>
<keyword id="KW-1160">Virus entry into host cell</keyword>
<proteinExistence type="inferred from homology"/>
<reference key="1">
    <citation type="journal article" date="1992" name="J. Virol.">
        <title>Primary structure of the herpesvirus saimiri genome.</title>
        <authorList>
            <person name="Albrecht J.-C."/>
            <person name="Nicholas J."/>
            <person name="Biller D."/>
            <person name="Cameron K.R."/>
            <person name="Biesinger B."/>
            <person name="Newman C."/>
            <person name="Wittmann S."/>
            <person name="Craxton M.A."/>
            <person name="Coleman H."/>
            <person name="Fleckenstein B."/>
            <person name="Honess R.W."/>
        </authorList>
    </citation>
    <scope>NUCLEOTIDE SEQUENCE [LARGE SCALE GENOMIC DNA]</scope>
</reference>
<reference key="2">
    <citation type="journal article" date="1988" name="J. Gen. Virol.">
        <title>Conservation of glycoprotein H (gH) in herpesviruses: nucleotide sequence of the gH gene from herpesvirus saimiri.</title>
        <authorList>
            <person name="Gompels U.A."/>
            <person name="Craxton M.A."/>
            <person name="Honess R.W."/>
        </authorList>
    </citation>
    <scope>NUCLEOTIDE SEQUENCE [GENOMIC DNA]</scope>
</reference>
<reference key="3">
    <citation type="journal article" date="1989" name="J. Gen. Virol.">
        <title>A comparative analysis of the sequence of the thymidine kinase gene of a gammaherpesvirus, herpesvirus saimiri.</title>
        <authorList>
            <person name="Honess R.W."/>
            <person name="Craxton M.A."/>
            <person name="Williams L."/>
            <person name="Gompels U.A."/>
        </authorList>
    </citation>
    <scope>NUCLEOTIDE SEQUENCE [GENOMIC DNA] OF 1-60</scope>
</reference>
<name>GH_SHV21</name>
<evidence type="ECO:0000255" key="1">
    <source>
        <dbReference type="HAMAP-Rule" id="MF_04033"/>
    </source>
</evidence>
<protein>
    <recommendedName>
        <fullName evidence="1">Envelope glycoprotein H</fullName>
        <shortName evidence="1">gH</shortName>
    </recommendedName>
</protein>
<organism>
    <name type="scientific">Saimiriine herpesvirus 2 (strain 11)</name>
    <name type="common">SaHV-2</name>
    <name type="synonym">Herpesvirus saimiri</name>
    <dbReference type="NCBI Taxonomy" id="10383"/>
    <lineage>
        <taxon>Viruses</taxon>
        <taxon>Duplodnaviria</taxon>
        <taxon>Heunggongvirae</taxon>
        <taxon>Peploviricota</taxon>
        <taxon>Herviviricetes</taxon>
        <taxon>Herpesvirales</taxon>
        <taxon>Orthoherpesviridae</taxon>
        <taxon>Gammaherpesvirinae</taxon>
        <taxon>Rhadinovirus</taxon>
        <taxon>Rhadinovirus saimiriinegamma2</taxon>
        <taxon>Saimiriine herpesvirus 2</taxon>
    </lineage>
</organism>
<organismHost>
    <name type="scientific">Saimiri sciureus</name>
    <name type="common">Common squirrel monkey</name>
    <dbReference type="NCBI Taxonomy" id="9521"/>
</organismHost>
<comment type="function">
    <text evidence="1">The heterodimer glycoprotein H-glycoprotein L is required for the fusion of viral and plasma membranes leading to virus entry into the host cell. Following initial binding to host receptor, membrane fusion is mediated by the fusion machinery composed of gB and the heterodimer gH/gL. May also be involved in the fusion between the virion envelope and the outer nuclear membrane during virion morphogenesis.</text>
</comment>
<comment type="subunit">
    <text evidence="1">Interacts with glycoprotein L (gL); this interaction is necessary for the correct processing and cell surface expression of gH. The heterodimer gH/gL seems to interact with gB trimers during fusion.</text>
</comment>
<comment type="subcellular location">
    <subcellularLocation>
        <location evidence="1">Virion membrane</location>
        <topology evidence="1">Single-pass type I membrane protein</topology>
    </subcellularLocation>
    <subcellularLocation>
        <location evidence="1">Host cell membrane</location>
        <topology evidence="1">Single-pass type I membrane protein</topology>
    </subcellularLocation>
    <subcellularLocation>
        <location evidence="1">Host endosome membrane</location>
        <topology evidence="1">Single-pass type I membrane protein</topology>
    </subcellularLocation>
    <text evidence="1">During virion morphogenesis, this protein probably accumulates in the endosomes and trans-Golgi where secondary envelopment occurs. It is probably transported to the cell surface from where it is endocytosed and directed to the trans-Golgi network (TGN).</text>
</comment>
<comment type="PTM">
    <text evidence="1">N-glycosylated, O-glycosylated, and sialylated.</text>
</comment>
<comment type="similarity">
    <text evidence="1">Belongs to the herpesviridae glycoprotein H family.</text>
</comment>
<feature type="signal peptide" evidence="1">
    <location>
        <begin position="1"/>
        <end position="18"/>
    </location>
</feature>
<feature type="chain" id="PRO_0000436662" description="Envelope glycoprotein H" evidence="1">
    <location>
        <begin position="19"/>
        <end position="717"/>
    </location>
</feature>
<feature type="topological domain" description="Virion surface" evidence="1">
    <location>
        <begin position="19"/>
        <end position="693"/>
    </location>
</feature>
<feature type="transmembrane region" description="Helical" evidence="1">
    <location>
        <begin position="694"/>
        <end position="714"/>
    </location>
</feature>
<feature type="topological domain" description="Intravirion" evidence="1">
    <location>
        <begin position="715"/>
        <end position="717"/>
    </location>
</feature>
<feature type="region of interest" description="Interaction with gL" evidence="1">
    <location>
        <begin position="177"/>
        <end position="239"/>
    </location>
</feature>
<feature type="glycosylation site" description="N-linked (GlcNAc...) asparagine; by host" evidence="1">
    <location>
        <position position="43"/>
    </location>
</feature>
<feature type="glycosylation site" description="N-linked (GlcNAc...) asparagine; by host" evidence="1">
    <location>
        <position position="59"/>
    </location>
</feature>
<feature type="glycosylation site" description="N-linked (GlcNAc...) asparagine; by host" evidence="1">
    <location>
        <position position="80"/>
    </location>
</feature>
<feature type="glycosylation site" description="N-linked (GlcNAc...) asparagine; by host" evidence="1">
    <location>
        <position position="128"/>
    </location>
</feature>
<feature type="glycosylation site" description="N-linked (GlcNAc...) asparagine; by host" evidence="1">
    <location>
        <position position="444"/>
    </location>
</feature>
<feature type="glycosylation site" description="N-linked (GlcNAc...) asparagine; by host" evidence="1">
    <location>
        <position position="560"/>
    </location>
</feature>
<feature type="glycosylation site" description="N-linked (GlcNAc...) asparagine; by host" evidence="1">
    <location>
        <position position="613"/>
    </location>
</feature>
<feature type="glycosylation site" description="N-linked (GlcNAc...) asparagine; by host" evidence="1">
    <location>
        <position position="675"/>
    </location>
</feature>
<sequence length="717" mass="82583">MTILQLFLVFLNILEALCDYQLPKPRINKPPAEERLKLRNGYNTTLIEFDDGVQSFNLNWTKIIEHIPHDELIELWREANVTEPLVNTLLKRSDTYRPETNVHIPGHGNSYACALPYWSYTIDQWEDNKTTGYLGNFGIPSKTVLNEFFYDFQYVYTNRQFYTEATYVLNCLIGATTPAYPTISCHITPNYLFVSVEFTKFDSLTLLFGHSHYLPPLKGHIVYNDIEGASNDVFSLVIFSTYDLFGKHVESFKFDIAKVFREIIETPPLTFIKNLQDEMFTIEIRDGCNINNIVNPKTFLFAFKAVVAHFLVIDSLRTQQHILLNCFANYMSELEFLRKLMESCFEFFEFDFPYTVIETLAASQALNVPKHVITSLSHQDKTNMLSLFRLSRHSKHVSAVAISEIIDLISHIYTAYSYTYMLTSSERKMLLDAYIVLNDIMHKNETVKKQDLLPYVLSSSMCTSLEIGNLLLHFGQKDVLDVYETFSPCYLSLRFDFTKEKLITEFPQSSLIAQKEINLGTNGFFQTLHMRHHTSLEILPIIKCIKSLSTDIILSIPLKNITYVISTKPVPNSKIYDVSEVFLKTSMIISAVNNDCKPYQGGSAAHQIPVIYNVTVPRRGCPYCSSVVLSYDESQGFQSMMYITDTYVQENLFTEHSPFFGDGNLHIHYLILMNNGTVIEVRGAYRARLVNFIIVIMVFILFLVGLYLLYKLFVYLT</sequence>
<dbReference type="EMBL" id="X64346">
    <property type="protein sequence ID" value="CAA45645.1"/>
    <property type="molecule type" value="Genomic_DNA"/>
</dbReference>
<dbReference type="EMBL" id="D00400">
    <property type="protein sequence ID" value="BAA00302.1"/>
    <property type="molecule type" value="Genomic_DNA"/>
</dbReference>
<dbReference type="EMBL" id="D00543">
    <property type="protein sequence ID" value="BAA00433.1"/>
    <property type="molecule type" value="Genomic_DNA"/>
</dbReference>
<dbReference type="RefSeq" id="NP_040224.1">
    <property type="nucleotide sequence ID" value="NC_001350.1"/>
</dbReference>
<dbReference type="SMR" id="P16492"/>
<dbReference type="GlyCosmos" id="P16492">
    <property type="glycosylation" value="8 sites, No reported glycans"/>
</dbReference>
<dbReference type="KEGG" id="vg:1682472"/>
<dbReference type="Proteomes" id="UP000000587">
    <property type="component" value="Segment"/>
</dbReference>
<dbReference type="GO" id="GO:0044175">
    <property type="term" value="C:host cell endosome membrane"/>
    <property type="evidence" value="ECO:0007669"/>
    <property type="project" value="UniProtKB-SubCell"/>
</dbReference>
<dbReference type="GO" id="GO:0020002">
    <property type="term" value="C:host cell plasma membrane"/>
    <property type="evidence" value="ECO:0007669"/>
    <property type="project" value="UniProtKB-SubCell"/>
</dbReference>
<dbReference type="GO" id="GO:0016020">
    <property type="term" value="C:membrane"/>
    <property type="evidence" value="ECO:0007669"/>
    <property type="project" value="UniProtKB-KW"/>
</dbReference>
<dbReference type="GO" id="GO:0019031">
    <property type="term" value="C:viral envelope"/>
    <property type="evidence" value="ECO:0007669"/>
    <property type="project" value="UniProtKB-KW"/>
</dbReference>
<dbReference type="GO" id="GO:0055036">
    <property type="term" value="C:virion membrane"/>
    <property type="evidence" value="ECO:0007669"/>
    <property type="project" value="UniProtKB-SubCell"/>
</dbReference>
<dbReference type="GO" id="GO:0019064">
    <property type="term" value="P:fusion of virus membrane with host plasma membrane"/>
    <property type="evidence" value="ECO:0007669"/>
    <property type="project" value="UniProtKB-KW"/>
</dbReference>
<dbReference type="GO" id="GO:0046718">
    <property type="term" value="P:symbiont entry into host cell"/>
    <property type="evidence" value="ECO:0007669"/>
    <property type="project" value="UniProtKB-KW"/>
</dbReference>
<dbReference type="Gene3D" id="2.60.40.3190">
    <property type="entry name" value="Herpesvirus glycoprotein H, C-terminal domain"/>
    <property type="match status" value="1"/>
</dbReference>
<dbReference type="Gene3D" id="3.90.380.20">
    <property type="entry name" value="Herpesvirus glycoprotein H, domain D-II"/>
    <property type="match status" value="1"/>
</dbReference>
<dbReference type="HAMAP" id="MF_04033">
    <property type="entry name" value="HSV_GH"/>
    <property type="match status" value="1"/>
</dbReference>
<dbReference type="InterPro" id="IPR003493">
    <property type="entry name" value="Herpes_gH"/>
</dbReference>
<dbReference type="InterPro" id="IPR035305">
    <property type="entry name" value="Herpes_glycoH_C"/>
</dbReference>
<dbReference type="InterPro" id="IPR038172">
    <property type="entry name" value="Herpes_glycoH_C_sf"/>
</dbReference>
<dbReference type="Pfam" id="PF17488">
    <property type="entry name" value="Herpes_glycoH_C"/>
    <property type="match status" value="1"/>
</dbReference>
<dbReference type="Pfam" id="PF02489">
    <property type="entry name" value="Herpes_glycop_H"/>
    <property type="match status" value="1"/>
</dbReference>
<gene>
    <name evidence="1" type="primary">gH</name>
    <name type="synonym">22</name>
</gene>